<keyword id="KW-0963">Cytoplasm</keyword>
<keyword id="KW-0227">DNA damage</keyword>
<keyword id="KW-0233">DNA recombination</keyword>
<keyword id="KW-0234">DNA repair</keyword>
<keyword id="KW-0238">DNA-binding</keyword>
<keyword id="KW-0255">Endonuclease</keyword>
<keyword id="KW-0378">Hydrolase</keyword>
<keyword id="KW-0460">Magnesium</keyword>
<keyword id="KW-0479">Metal-binding</keyword>
<keyword id="KW-0540">Nuclease</keyword>
<organism>
    <name type="scientific">Burkholderia ambifaria (strain ATCC BAA-244 / DSM 16087 / CCUG 44356 / LMG 19182 / AMMD)</name>
    <name type="common">Burkholderia cepacia (strain AMMD)</name>
    <dbReference type="NCBI Taxonomy" id="339670"/>
    <lineage>
        <taxon>Bacteria</taxon>
        <taxon>Pseudomonadati</taxon>
        <taxon>Pseudomonadota</taxon>
        <taxon>Betaproteobacteria</taxon>
        <taxon>Burkholderiales</taxon>
        <taxon>Burkholderiaceae</taxon>
        <taxon>Burkholderia</taxon>
        <taxon>Burkholderia cepacia complex</taxon>
    </lineage>
</organism>
<reference key="1">
    <citation type="submission" date="2006-08" db="EMBL/GenBank/DDBJ databases">
        <title>Complete sequence of chromosome 1 of Burkholderia cepacia AMMD.</title>
        <authorList>
            <person name="Copeland A."/>
            <person name="Lucas S."/>
            <person name="Lapidus A."/>
            <person name="Barry K."/>
            <person name="Detter J.C."/>
            <person name="Glavina del Rio T."/>
            <person name="Hammon N."/>
            <person name="Israni S."/>
            <person name="Pitluck S."/>
            <person name="Bruce D."/>
            <person name="Chain P."/>
            <person name="Malfatti S."/>
            <person name="Shin M."/>
            <person name="Vergez L."/>
            <person name="Schmutz J."/>
            <person name="Larimer F."/>
            <person name="Land M."/>
            <person name="Hauser L."/>
            <person name="Kyrpides N."/>
            <person name="Kim E."/>
            <person name="Parke J."/>
            <person name="Coenye T."/>
            <person name="Konstantinidis K."/>
            <person name="Ramette A."/>
            <person name="Tiedje J."/>
            <person name="Richardson P."/>
        </authorList>
    </citation>
    <scope>NUCLEOTIDE SEQUENCE [LARGE SCALE GENOMIC DNA]</scope>
    <source>
        <strain>ATCC BAA-244 / DSM 16087 / CCUG 44356 / LMG 19182 / AMMD</strain>
    </source>
</reference>
<proteinExistence type="inferred from homology"/>
<dbReference type="EC" id="3.1.21.10" evidence="1"/>
<dbReference type="EMBL" id="CP000440">
    <property type="protein sequence ID" value="ABI86142.1"/>
    <property type="molecule type" value="Genomic_DNA"/>
</dbReference>
<dbReference type="RefSeq" id="WP_006751896.1">
    <property type="nucleotide sequence ID" value="NZ_CP009798.1"/>
</dbReference>
<dbReference type="SMR" id="Q0BI81"/>
<dbReference type="GeneID" id="93084001"/>
<dbReference type="KEGG" id="bam:Bamb_0583"/>
<dbReference type="PATRIC" id="fig|339670.21.peg.1014"/>
<dbReference type="eggNOG" id="COG0817">
    <property type="taxonomic scope" value="Bacteria"/>
</dbReference>
<dbReference type="Proteomes" id="UP000000662">
    <property type="component" value="Chromosome 1"/>
</dbReference>
<dbReference type="GO" id="GO:0005737">
    <property type="term" value="C:cytoplasm"/>
    <property type="evidence" value="ECO:0007669"/>
    <property type="project" value="UniProtKB-SubCell"/>
</dbReference>
<dbReference type="GO" id="GO:0048476">
    <property type="term" value="C:Holliday junction resolvase complex"/>
    <property type="evidence" value="ECO:0007669"/>
    <property type="project" value="UniProtKB-UniRule"/>
</dbReference>
<dbReference type="GO" id="GO:0008821">
    <property type="term" value="F:crossover junction DNA endonuclease activity"/>
    <property type="evidence" value="ECO:0007669"/>
    <property type="project" value="UniProtKB-UniRule"/>
</dbReference>
<dbReference type="GO" id="GO:0003677">
    <property type="term" value="F:DNA binding"/>
    <property type="evidence" value="ECO:0007669"/>
    <property type="project" value="UniProtKB-KW"/>
</dbReference>
<dbReference type="GO" id="GO:0000287">
    <property type="term" value="F:magnesium ion binding"/>
    <property type="evidence" value="ECO:0007669"/>
    <property type="project" value="UniProtKB-UniRule"/>
</dbReference>
<dbReference type="GO" id="GO:0006310">
    <property type="term" value="P:DNA recombination"/>
    <property type="evidence" value="ECO:0007669"/>
    <property type="project" value="UniProtKB-UniRule"/>
</dbReference>
<dbReference type="GO" id="GO:0006281">
    <property type="term" value="P:DNA repair"/>
    <property type="evidence" value="ECO:0007669"/>
    <property type="project" value="UniProtKB-UniRule"/>
</dbReference>
<dbReference type="CDD" id="cd16962">
    <property type="entry name" value="RuvC"/>
    <property type="match status" value="1"/>
</dbReference>
<dbReference type="FunFam" id="3.30.420.10:FF:000002">
    <property type="entry name" value="Crossover junction endodeoxyribonuclease RuvC"/>
    <property type="match status" value="1"/>
</dbReference>
<dbReference type="Gene3D" id="3.30.420.10">
    <property type="entry name" value="Ribonuclease H-like superfamily/Ribonuclease H"/>
    <property type="match status" value="1"/>
</dbReference>
<dbReference type="HAMAP" id="MF_00034">
    <property type="entry name" value="RuvC"/>
    <property type="match status" value="1"/>
</dbReference>
<dbReference type="InterPro" id="IPR012337">
    <property type="entry name" value="RNaseH-like_sf"/>
</dbReference>
<dbReference type="InterPro" id="IPR036397">
    <property type="entry name" value="RNaseH_sf"/>
</dbReference>
<dbReference type="InterPro" id="IPR020563">
    <property type="entry name" value="X-over_junc_endoDNase_Mg_BS"/>
</dbReference>
<dbReference type="InterPro" id="IPR002176">
    <property type="entry name" value="X-over_junc_endoDNase_RuvC"/>
</dbReference>
<dbReference type="NCBIfam" id="TIGR00228">
    <property type="entry name" value="ruvC"/>
    <property type="match status" value="1"/>
</dbReference>
<dbReference type="PANTHER" id="PTHR30194">
    <property type="entry name" value="CROSSOVER JUNCTION ENDODEOXYRIBONUCLEASE RUVC"/>
    <property type="match status" value="1"/>
</dbReference>
<dbReference type="PANTHER" id="PTHR30194:SF3">
    <property type="entry name" value="CROSSOVER JUNCTION ENDODEOXYRIBONUCLEASE RUVC"/>
    <property type="match status" value="1"/>
</dbReference>
<dbReference type="Pfam" id="PF02075">
    <property type="entry name" value="RuvC"/>
    <property type="match status" value="1"/>
</dbReference>
<dbReference type="PRINTS" id="PR00696">
    <property type="entry name" value="RSOLVASERUVC"/>
</dbReference>
<dbReference type="SUPFAM" id="SSF53098">
    <property type="entry name" value="Ribonuclease H-like"/>
    <property type="match status" value="1"/>
</dbReference>
<dbReference type="PROSITE" id="PS01321">
    <property type="entry name" value="RUVC"/>
    <property type="match status" value="1"/>
</dbReference>
<evidence type="ECO:0000255" key="1">
    <source>
        <dbReference type="HAMAP-Rule" id="MF_00034"/>
    </source>
</evidence>
<name>RUVC_BURCM</name>
<protein>
    <recommendedName>
        <fullName evidence="1">Crossover junction endodeoxyribonuclease RuvC</fullName>
        <ecNumber evidence="1">3.1.21.10</ecNumber>
    </recommendedName>
    <alternativeName>
        <fullName evidence="1">Holliday junction nuclease RuvC</fullName>
    </alternativeName>
    <alternativeName>
        <fullName evidence="1">Holliday junction resolvase RuvC</fullName>
    </alternativeName>
</protein>
<accession>Q0BI81</accession>
<gene>
    <name evidence="1" type="primary">ruvC</name>
    <name type="ordered locus">Bamb_0583</name>
</gene>
<sequence>MRILGIDPGLRVTGFGVIDVSGHRLAYVASGVIRTPTADLATRLGTIFQGVSTLVREHAPDQAAIEQVFVNVNPQSTLLLGQARGAAICGLVSGGLPVAEYTALQLKQAVVGYGRATKSQMQEMVTRLLNLTGQPGSDAADALGMAICHAHSGSTLGTIGAIGGLAPALAKKGLRVRRGRLVG</sequence>
<comment type="function">
    <text evidence="1">The RuvA-RuvB-RuvC complex processes Holliday junction (HJ) DNA during genetic recombination and DNA repair. Endonuclease that resolves HJ intermediates. Cleaves cruciform DNA by making single-stranded nicks across the HJ at symmetrical positions within the homologous arms, yielding a 5'-phosphate and a 3'-hydroxyl group; requires a central core of homology in the junction. The consensus cleavage sequence is 5'-(A/T)TT(C/G)-3'. Cleavage occurs on the 3'-side of the TT dinucleotide at the point of strand exchange. HJ branch migration catalyzed by RuvA-RuvB allows RuvC to scan DNA until it finds its consensus sequence, where it cleaves and resolves the cruciform DNA.</text>
</comment>
<comment type="catalytic activity">
    <reaction evidence="1">
        <text>Endonucleolytic cleavage at a junction such as a reciprocal single-stranded crossover between two homologous DNA duplexes (Holliday junction).</text>
        <dbReference type="EC" id="3.1.21.10"/>
    </reaction>
</comment>
<comment type="cofactor">
    <cofactor evidence="1">
        <name>Mg(2+)</name>
        <dbReference type="ChEBI" id="CHEBI:18420"/>
    </cofactor>
    <text evidence="1">Binds 2 Mg(2+) ion per subunit.</text>
</comment>
<comment type="subunit">
    <text evidence="1">Homodimer which binds Holliday junction (HJ) DNA. The HJ becomes 2-fold symmetrical on binding to RuvC with unstacked arms; it has a different conformation from HJ DNA in complex with RuvA. In the full resolvosome a probable DNA-RuvA(4)-RuvB(12)-RuvC(2) complex forms which resolves the HJ.</text>
</comment>
<comment type="subcellular location">
    <subcellularLocation>
        <location evidence="1">Cytoplasm</location>
    </subcellularLocation>
</comment>
<comment type="similarity">
    <text evidence="1">Belongs to the RuvC family.</text>
</comment>
<feature type="chain" id="PRO_1000002729" description="Crossover junction endodeoxyribonuclease RuvC">
    <location>
        <begin position="1"/>
        <end position="183"/>
    </location>
</feature>
<feature type="active site" evidence="1">
    <location>
        <position position="7"/>
    </location>
</feature>
<feature type="active site" evidence="1">
    <location>
        <position position="66"/>
    </location>
</feature>
<feature type="active site" evidence="1">
    <location>
        <position position="138"/>
    </location>
</feature>
<feature type="binding site" evidence="1">
    <location>
        <position position="7"/>
    </location>
    <ligand>
        <name>Mg(2+)</name>
        <dbReference type="ChEBI" id="CHEBI:18420"/>
        <label>1</label>
    </ligand>
</feature>
<feature type="binding site" evidence="1">
    <location>
        <position position="66"/>
    </location>
    <ligand>
        <name>Mg(2+)</name>
        <dbReference type="ChEBI" id="CHEBI:18420"/>
        <label>2</label>
    </ligand>
</feature>
<feature type="binding site" evidence="1">
    <location>
        <position position="138"/>
    </location>
    <ligand>
        <name>Mg(2+)</name>
        <dbReference type="ChEBI" id="CHEBI:18420"/>
        <label>1</label>
    </ligand>
</feature>